<comment type="function">
    <text evidence="1">Phosphorolytic 3'-5' exoribonuclease that plays an important role in tRNA 3'-end maturation. Removes nucleotide residues following the 3'-CCA terminus of tRNAs; can also add nucleotides to the ends of RNA molecules by using nucleoside diphosphates as substrates, but this may not be physiologically important. Probably plays a role in initiation of 16S rRNA degradation (leading to ribosome degradation) during starvation.</text>
</comment>
<comment type="catalytic activity">
    <reaction evidence="1">
        <text>tRNA(n+1) + phosphate = tRNA(n) + a ribonucleoside 5'-diphosphate</text>
        <dbReference type="Rhea" id="RHEA:10628"/>
        <dbReference type="Rhea" id="RHEA-COMP:17343"/>
        <dbReference type="Rhea" id="RHEA-COMP:17344"/>
        <dbReference type="ChEBI" id="CHEBI:43474"/>
        <dbReference type="ChEBI" id="CHEBI:57930"/>
        <dbReference type="ChEBI" id="CHEBI:173114"/>
        <dbReference type="EC" id="2.7.7.56"/>
    </reaction>
</comment>
<comment type="subunit">
    <text evidence="1">Homohexameric ring arranged as a trimer of dimers.</text>
</comment>
<comment type="similarity">
    <text evidence="1">Belongs to the RNase PH family.</text>
</comment>
<feature type="chain" id="PRO_0000139907" description="Ribonuclease PH">
    <location>
        <begin position="1"/>
        <end position="240"/>
    </location>
</feature>
<feature type="binding site" evidence="1">
    <location>
        <position position="86"/>
    </location>
    <ligand>
        <name>phosphate</name>
        <dbReference type="ChEBI" id="CHEBI:43474"/>
        <note>substrate</note>
    </ligand>
</feature>
<feature type="binding site" evidence="1">
    <location>
        <begin position="124"/>
        <end position="126"/>
    </location>
    <ligand>
        <name>phosphate</name>
        <dbReference type="ChEBI" id="CHEBI:43474"/>
        <note>substrate</note>
    </ligand>
</feature>
<protein>
    <recommendedName>
        <fullName evidence="1">Ribonuclease PH</fullName>
        <shortName evidence="1">RNase PH</shortName>
        <ecNumber evidence="1">2.7.7.56</ecNumber>
    </recommendedName>
    <alternativeName>
        <fullName evidence="1">tRNA nucleotidyltransferase</fullName>
    </alternativeName>
</protein>
<accession>Q65W01</accession>
<name>RNPH_MANSM</name>
<organism>
    <name type="scientific">Mannheimia succiniciproducens (strain KCTC 0769BP / MBEL55E)</name>
    <dbReference type="NCBI Taxonomy" id="221988"/>
    <lineage>
        <taxon>Bacteria</taxon>
        <taxon>Pseudomonadati</taxon>
        <taxon>Pseudomonadota</taxon>
        <taxon>Gammaproteobacteria</taxon>
        <taxon>Pasteurellales</taxon>
        <taxon>Pasteurellaceae</taxon>
        <taxon>Basfia</taxon>
    </lineage>
</organism>
<dbReference type="EC" id="2.7.7.56" evidence="1"/>
<dbReference type="EMBL" id="AE016827">
    <property type="protein sequence ID" value="AAU36859.1"/>
    <property type="molecule type" value="Genomic_DNA"/>
</dbReference>
<dbReference type="RefSeq" id="WP_011199434.1">
    <property type="nucleotide sequence ID" value="NC_006300.1"/>
</dbReference>
<dbReference type="SMR" id="Q65W01"/>
<dbReference type="STRING" id="221988.MS0252"/>
<dbReference type="KEGG" id="msu:MS0252"/>
<dbReference type="eggNOG" id="COG0689">
    <property type="taxonomic scope" value="Bacteria"/>
</dbReference>
<dbReference type="HOGENOM" id="CLU_050858_0_0_6"/>
<dbReference type="OrthoDB" id="9802265at2"/>
<dbReference type="Proteomes" id="UP000000607">
    <property type="component" value="Chromosome"/>
</dbReference>
<dbReference type="GO" id="GO:0000175">
    <property type="term" value="F:3'-5'-RNA exonuclease activity"/>
    <property type="evidence" value="ECO:0007669"/>
    <property type="project" value="UniProtKB-UniRule"/>
</dbReference>
<dbReference type="GO" id="GO:0000049">
    <property type="term" value="F:tRNA binding"/>
    <property type="evidence" value="ECO:0007669"/>
    <property type="project" value="UniProtKB-UniRule"/>
</dbReference>
<dbReference type="GO" id="GO:0009022">
    <property type="term" value="F:tRNA nucleotidyltransferase activity"/>
    <property type="evidence" value="ECO:0007669"/>
    <property type="project" value="UniProtKB-UniRule"/>
</dbReference>
<dbReference type="GO" id="GO:0016075">
    <property type="term" value="P:rRNA catabolic process"/>
    <property type="evidence" value="ECO:0007669"/>
    <property type="project" value="UniProtKB-UniRule"/>
</dbReference>
<dbReference type="GO" id="GO:0006364">
    <property type="term" value="P:rRNA processing"/>
    <property type="evidence" value="ECO:0007669"/>
    <property type="project" value="UniProtKB-KW"/>
</dbReference>
<dbReference type="GO" id="GO:0008033">
    <property type="term" value="P:tRNA processing"/>
    <property type="evidence" value="ECO:0007669"/>
    <property type="project" value="UniProtKB-UniRule"/>
</dbReference>
<dbReference type="CDD" id="cd11362">
    <property type="entry name" value="RNase_PH_bact"/>
    <property type="match status" value="1"/>
</dbReference>
<dbReference type="FunFam" id="3.30.230.70:FF:000003">
    <property type="entry name" value="Ribonuclease PH"/>
    <property type="match status" value="1"/>
</dbReference>
<dbReference type="Gene3D" id="3.30.230.70">
    <property type="entry name" value="GHMP Kinase, N-terminal domain"/>
    <property type="match status" value="1"/>
</dbReference>
<dbReference type="HAMAP" id="MF_00564">
    <property type="entry name" value="RNase_PH"/>
    <property type="match status" value="1"/>
</dbReference>
<dbReference type="InterPro" id="IPR001247">
    <property type="entry name" value="ExoRNase_PH_dom1"/>
</dbReference>
<dbReference type="InterPro" id="IPR015847">
    <property type="entry name" value="ExoRNase_PH_dom2"/>
</dbReference>
<dbReference type="InterPro" id="IPR036345">
    <property type="entry name" value="ExoRNase_PH_dom2_sf"/>
</dbReference>
<dbReference type="InterPro" id="IPR027408">
    <property type="entry name" value="PNPase/RNase_PH_dom_sf"/>
</dbReference>
<dbReference type="InterPro" id="IPR020568">
    <property type="entry name" value="Ribosomal_Su5_D2-typ_SF"/>
</dbReference>
<dbReference type="InterPro" id="IPR050080">
    <property type="entry name" value="RNase_PH"/>
</dbReference>
<dbReference type="InterPro" id="IPR002381">
    <property type="entry name" value="RNase_PH_bac-type"/>
</dbReference>
<dbReference type="InterPro" id="IPR018336">
    <property type="entry name" value="RNase_PH_CS"/>
</dbReference>
<dbReference type="NCBIfam" id="TIGR01966">
    <property type="entry name" value="RNasePH"/>
    <property type="match status" value="1"/>
</dbReference>
<dbReference type="PANTHER" id="PTHR11953">
    <property type="entry name" value="EXOSOME COMPLEX COMPONENT"/>
    <property type="match status" value="1"/>
</dbReference>
<dbReference type="PANTHER" id="PTHR11953:SF0">
    <property type="entry name" value="EXOSOME COMPLEX COMPONENT RRP41"/>
    <property type="match status" value="1"/>
</dbReference>
<dbReference type="Pfam" id="PF01138">
    <property type="entry name" value="RNase_PH"/>
    <property type="match status" value="1"/>
</dbReference>
<dbReference type="Pfam" id="PF03725">
    <property type="entry name" value="RNase_PH_C"/>
    <property type="match status" value="1"/>
</dbReference>
<dbReference type="SUPFAM" id="SSF55666">
    <property type="entry name" value="Ribonuclease PH domain 2-like"/>
    <property type="match status" value="1"/>
</dbReference>
<dbReference type="SUPFAM" id="SSF54211">
    <property type="entry name" value="Ribosomal protein S5 domain 2-like"/>
    <property type="match status" value="1"/>
</dbReference>
<dbReference type="PROSITE" id="PS01277">
    <property type="entry name" value="RIBONUCLEASE_PH"/>
    <property type="match status" value="1"/>
</dbReference>
<proteinExistence type="inferred from homology"/>
<keyword id="KW-0548">Nucleotidyltransferase</keyword>
<keyword id="KW-0694">RNA-binding</keyword>
<keyword id="KW-0698">rRNA processing</keyword>
<keyword id="KW-0808">Transferase</keyword>
<keyword id="KW-0819">tRNA processing</keyword>
<keyword id="KW-0820">tRNA-binding</keyword>
<gene>
    <name evidence="1" type="primary">rph</name>
    <name type="ordered locus">MS0252</name>
</gene>
<sequence>MRPNNRAVNEPRPIKITRHYTKHAEGSVLVEFGDTKVICTATVEDSVPRFLKGQGQGWVTAEYGMLPRSTHSRMLREAAKGKQGGRTMEIQRLIARSLRAMVDLTALGERSITLDCDVIQADGGTRTASITGACVALTDAINALVENGTLKTSPLKGLVAAVSVGIVNGEAVCDLEYVEDSAAETDMNVVMMEDGRMIEVQGTAEGEPFSHEELLTLLNLAKQGCNMIFDAQRRALAADC</sequence>
<evidence type="ECO:0000255" key="1">
    <source>
        <dbReference type="HAMAP-Rule" id="MF_00564"/>
    </source>
</evidence>
<reference key="1">
    <citation type="journal article" date="2004" name="Nat. Biotechnol.">
        <title>The genome sequence of the capnophilic rumen bacterium Mannheimia succiniciproducens.</title>
        <authorList>
            <person name="Hong S.H."/>
            <person name="Kim J.S."/>
            <person name="Lee S.Y."/>
            <person name="In Y.H."/>
            <person name="Choi S.S."/>
            <person name="Rih J.-K."/>
            <person name="Kim C.H."/>
            <person name="Jeong H."/>
            <person name="Hur C.G."/>
            <person name="Kim J.J."/>
        </authorList>
    </citation>
    <scope>NUCLEOTIDE SEQUENCE [LARGE SCALE GENOMIC DNA]</scope>
    <source>
        <strain>KCTC 0769BP / MBEL55E</strain>
    </source>
</reference>